<sequence>MKIAVIGAGVTGLAAAARIASQGHEVTIFEKNNNVGGRMNQLKKDGFTFDMGPTIVMMPDVYKDVFTACGKNYEDYIELRQLRYIYDVYFDHDDRITVPTDLAELQQMLESIEPGSTHGFMSFLTDVYKKYEIARRYFLERTYRKPSDFYNMTSLVQGAKLKTLNHADQLIEHYIDNEKIQKLLAFQTLYIGIDPKRGPSLYSIIPMIEMMFGVHFIKGGMYGMAQGLAQLNKDLGVNIELNAEIEQIIIDPKFKRADAIKVNGDIRKFDKILCTADFPSVAESLMPDFAPIKKYPPHKIADLDYSCSAFLMYIGIDIDVTDQVRLHNVIFSDDFRGNIEEIFEGRLSYDPSIYVYVPAVADKSLAPEGKTGIYVLMPTPELKTGSGIDWSDEALTQQIKEIIYRKLATIEVFEDIKSHIVSETIFTPNDFEQTYHAKFGSAFGLMPTLAQSNYYRPQNVSRDYKDLYFAGASTHPGAGVPIVLTSAKITVDEMIKDIEQGV</sequence>
<evidence type="ECO:0000250" key="1">
    <source>
        <dbReference type="UniProtKB" id="O07855"/>
    </source>
</evidence>
<evidence type="ECO:0000255" key="2"/>
<evidence type="ECO:0000305" key="3"/>
<feature type="chain" id="PRO_0000272197" description="4,4'-diapophytoene desaturase (4,4'-diaponeurosporene-forming)">
    <location>
        <begin position="1"/>
        <end position="502"/>
    </location>
</feature>
<feature type="binding site" evidence="2">
    <location>
        <begin position="5"/>
        <end position="17"/>
    </location>
    <ligand>
        <name>FAD</name>
        <dbReference type="ChEBI" id="CHEBI:57692"/>
    </ligand>
</feature>
<comment type="function">
    <text evidence="1">Involved in the biosynthesis of the yellow-orange carotenoid staphyloxanthin, which plays a role in the virulence via its protective function against oxidative stress. Catalyzes three successive dehydrogenation reactions that lead to the introduction of three double bonds into 4,4'-diapophytoene (dehydrosqualene), with 4,4'-diapophytofluene and 4,4'-diapo-zeta-carotene as intermediates, and 4,4'-diaponeurosporene (the major deep-yellow pigment in staphylococci strains) as the end product.</text>
</comment>
<comment type="catalytic activity">
    <reaction evidence="1">
        <text>15-cis-4,4'-diapophytoene + 3 FAD + 3 H(+) = all-trans-4,4'-diaponeurosporene + 3 FADH2</text>
        <dbReference type="Rhea" id="RHEA:42800"/>
        <dbReference type="ChEBI" id="CHEBI:15378"/>
        <dbReference type="ChEBI" id="CHEBI:57692"/>
        <dbReference type="ChEBI" id="CHEBI:58307"/>
        <dbReference type="ChEBI" id="CHEBI:62738"/>
        <dbReference type="ChEBI" id="CHEBI:62743"/>
    </reaction>
</comment>
<comment type="pathway">
    <text evidence="1">Carotenoid biosynthesis; staphyloxanthin biosynthesis; staphyloxanthin from farnesyl diphosphate: step 2/5.</text>
</comment>
<comment type="similarity">
    <text evidence="3">Belongs to the carotenoid/retinoid oxidoreductase family. CrtN subfamily.</text>
</comment>
<proteinExistence type="inferred from homology"/>
<name>CRTN_STAAS</name>
<accession>Q6G6B3</accession>
<keyword id="KW-0125">Carotenoid biosynthesis</keyword>
<keyword id="KW-0274">FAD</keyword>
<keyword id="KW-0285">Flavoprotein</keyword>
<keyword id="KW-0560">Oxidoreductase</keyword>
<keyword id="KW-0843">Virulence</keyword>
<gene>
    <name evidence="1" type="primary">crtN</name>
    <name type="ordered locus">SAS2447</name>
</gene>
<protein>
    <recommendedName>
        <fullName evidence="1">4,4'-diapophytoene desaturase (4,4'-diaponeurosporene-forming)</fullName>
        <ecNumber evidence="1">1.3.8.-</ecNumber>
    </recommendedName>
    <alternativeName>
        <fullName evidence="1">Dehydrosqualene desaturase</fullName>
    </alternativeName>
</protein>
<reference key="1">
    <citation type="journal article" date="2004" name="Proc. Natl. Acad. Sci. U.S.A.">
        <title>Complete genomes of two clinical Staphylococcus aureus strains: evidence for the rapid evolution of virulence and drug resistance.</title>
        <authorList>
            <person name="Holden M.T.G."/>
            <person name="Feil E.J."/>
            <person name="Lindsay J.A."/>
            <person name="Peacock S.J."/>
            <person name="Day N.P.J."/>
            <person name="Enright M.C."/>
            <person name="Foster T.J."/>
            <person name="Moore C.E."/>
            <person name="Hurst L."/>
            <person name="Atkin R."/>
            <person name="Barron A."/>
            <person name="Bason N."/>
            <person name="Bentley S.D."/>
            <person name="Chillingworth C."/>
            <person name="Chillingworth T."/>
            <person name="Churcher C."/>
            <person name="Clark L."/>
            <person name="Corton C."/>
            <person name="Cronin A."/>
            <person name="Doggett J."/>
            <person name="Dowd L."/>
            <person name="Feltwell T."/>
            <person name="Hance Z."/>
            <person name="Harris B."/>
            <person name="Hauser H."/>
            <person name="Holroyd S."/>
            <person name="Jagels K."/>
            <person name="James K.D."/>
            <person name="Lennard N."/>
            <person name="Line A."/>
            <person name="Mayes R."/>
            <person name="Moule S."/>
            <person name="Mungall K."/>
            <person name="Ormond D."/>
            <person name="Quail M.A."/>
            <person name="Rabbinowitsch E."/>
            <person name="Rutherford K.M."/>
            <person name="Sanders M."/>
            <person name="Sharp S."/>
            <person name="Simmonds M."/>
            <person name="Stevens K."/>
            <person name="Whitehead S."/>
            <person name="Barrell B.G."/>
            <person name="Spratt B.G."/>
            <person name="Parkhill J."/>
        </authorList>
    </citation>
    <scope>NUCLEOTIDE SEQUENCE [LARGE SCALE GENOMIC DNA]</scope>
    <source>
        <strain>MSSA476</strain>
    </source>
</reference>
<organism>
    <name type="scientific">Staphylococcus aureus (strain MSSA476)</name>
    <dbReference type="NCBI Taxonomy" id="282459"/>
    <lineage>
        <taxon>Bacteria</taxon>
        <taxon>Bacillati</taxon>
        <taxon>Bacillota</taxon>
        <taxon>Bacilli</taxon>
        <taxon>Bacillales</taxon>
        <taxon>Staphylococcaceae</taxon>
        <taxon>Staphylococcus</taxon>
    </lineage>
</organism>
<dbReference type="EC" id="1.3.8.-" evidence="1"/>
<dbReference type="EMBL" id="BX571857">
    <property type="protein sequence ID" value="CAG44263.1"/>
    <property type="molecule type" value="Genomic_DNA"/>
</dbReference>
<dbReference type="RefSeq" id="WP_000686167.1">
    <property type="nucleotide sequence ID" value="NC_002953.3"/>
</dbReference>
<dbReference type="SMR" id="Q6G6B3"/>
<dbReference type="KEGG" id="sas:SAS2447"/>
<dbReference type="HOGENOM" id="CLU_019722_2_1_9"/>
<dbReference type="UniPathway" id="UPA00029">
    <property type="reaction ID" value="UER00557"/>
</dbReference>
<dbReference type="GO" id="GO:0102223">
    <property type="term" value="F:4,4'-diapophytoene desaturase (4,4'-diaponeurosporene-forming)"/>
    <property type="evidence" value="ECO:0007669"/>
    <property type="project" value="RHEA"/>
</dbReference>
<dbReference type="GO" id="GO:0016117">
    <property type="term" value="P:carotenoid biosynthetic process"/>
    <property type="evidence" value="ECO:0007669"/>
    <property type="project" value="UniProtKB-KW"/>
</dbReference>
<dbReference type="Gene3D" id="3.50.50.60">
    <property type="entry name" value="FAD/NAD(P)-binding domain"/>
    <property type="match status" value="2"/>
</dbReference>
<dbReference type="InterPro" id="IPR002937">
    <property type="entry name" value="Amino_oxidase"/>
</dbReference>
<dbReference type="InterPro" id="IPR014105">
    <property type="entry name" value="Carotenoid/retinoid_OxRdtase"/>
</dbReference>
<dbReference type="InterPro" id="IPR036188">
    <property type="entry name" value="FAD/NAD-bd_sf"/>
</dbReference>
<dbReference type="NCBIfam" id="TIGR02734">
    <property type="entry name" value="crtI_fam"/>
    <property type="match status" value="1"/>
</dbReference>
<dbReference type="PANTHER" id="PTHR43734">
    <property type="entry name" value="PHYTOENE DESATURASE"/>
    <property type="match status" value="1"/>
</dbReference>
<dbReference type="PANTHER" id="PTHR43734:SF1">
    <property type="entry name" value="PHYTOENE DESATURASE"/>
    <property type="match status" value="1"/>
</dbReference>
<dbReference type="Pfam" id="PF01593">
    <property type="entry name" value="Amino_oxidase"/>
    <property type="match status" value="1"/>
</dbReference>
<dbReference type="PRINTS" id="PR00419">
    <property type="entry name" value="ADXRDTASE"/>
</dbReference>
<dbReference type="SUPFAM" id="SSF51905">
    <property type="entry name" value="FAD/NAD(P)-binding domain"/>
    <property type="match status" value="1"/>
</dbReference>